<reference key="1">
    <citation type="submission" date="2007-07" db="EMBL/GenBank/DDBJ databases">
        <title>Complete genome sequence of Campylobacter hominis ATCC BAA-381, a commensal isolated from the human gastrointestinal tract.</title>
        <authorList>
            <person name="Fouts D.E."/>
            <person name="Mongodin E.F."/>
            <person name="Puiu D."/>
            <person name="Sebastian Y."/>
            <person name="Miller W.G."/>
            <person name="Mandrell R.E."/>
            <person name="Nelson K.E."/>
        </authorList>
    </citation>
    <scope>NUCLEOTIDE SEQUENCE [LARGE SCALE GENOMIC DNA]</scope>
    <source>
        <strain>ATCC BAA-381 / DSM 21671 / CCUG 45161 / LMG 19568 / NCTC 13146 / CH001A</strain>
    </source>
</reference>
<accession>A7I3D5</accession>
<organism>
    <name type="scientific">Campylobacter hominis (strain ATCC BAA-381 / DSM 21671 / CCUG 45161 / LMG 19568 / NCTC 13146 / CH001A)</name>
    <dbReference type="NCBI Taxonomy" id="360107"/>
    <lineage>
        <taxon>Bacteria</taxon>
        <taxon>Pseudomonadati</taxon>
        <taxon>Campylobacterota</taxon>
        <taxon>Epsilonproteobacteria</taxon>
        <taxon>Campylobacterales</taxon>
        <taxon>Campylobacteraceae</taxon>
        <taxon>Campylobacter</taxon>
    </lineage>
</organism>
<dbReference type="EC" id="2.3.1.274" evidence="1"/>
<dbReference type="EMBL" id="CP000776">
    <property type="protein sequence ID" value="ABS51747.1"/>
    <property type="molecule type" value="Genomic_DNA"/>
</dbReference>
<dbReference type="RefSeq" id="WP_012109330.1">
    <property type="nucleotide sequence ID" value="NC_009714.1"/>
</dbReference>
<dbReference type="SMR" id="A7I3D5"/>
<dbReference type="STRING" id="360107.CHAB381_1491"/>
<dbReference type="KEGG" id="cha:CHAB381_1491"/>
<dbReference type="eggNOG" id="COG0416">
    <property type="taxonomic scope" value="Bacteria"/>
</dbReference>
<dbReference type="HOGENOM" id="CLU_039379_1_1_7"/>
<dbReference type="OrthoDB" id="9806408at2"/>
<dbReference type="UniPathway" id="UPA00085"/>
<dbReference type="Proteomes" id="UP000002407">
    <property type="component" value="Chromosome"/>
</dbReference>
<dbReference type="GO" id="GO:0005737">
    <property type="term" value="C:cytoplasm"/>
    <property type="evidence" value="ECO:0007669"/>
    <property type="project" value="UniProtKB-SubCell"/>
</dbReference>
<dbReference type="GO" id="GO:0043811">
    <property type="term" value="F:phosphate:acyl-[acyl carrier protein] acyltransferase activity"/>
    <property type="evidence" value="ECO:0007669"/>
    <property type="project" value="UniProtKB-UniRule"/>
</dbReference>
<dbReference type="GO" id="GO:0006633">
    <property type="term" value="P:fatty acid biosynthetic process"/>
    <property type="evidence" value="ECO:0007669"/>
    <property type="project" value="UniProtKB-UniRule"/>
</dbReference>
<dbReference type="GO" id="GO:0008654">
    <property type="term" value="P:phospholipid biosynthetic process"/>
    <property type="evidence" value="ECO:0007669"/>
    <property type="project" value="UniProtKB-KW"/>
</dbReference>
<dbReference type="Gene3D" id="3.40.718.10">
    <property type="entry name" value="Isopropylmalate Dehydrogenase"/>
    <property type="match status" value="1"/>
</dbReference>
<dbReference type="HAMAP" id="MF_00019">
    <property type="entry name" value="PlsX"/>
    <property type="match status" value="1"/>
</dbReference>
<dbReference type="InterPro" id="IPR003664">
    <property type="entry name" value="FA_synthesis"/>
</dbReference>
<dbReference type="InterPro" id="IPR012281">
    <property type="entry name" value="Phospholipid_synth_PlsX-like"/>
</dbReference>
<dbReference type="NCBIfam" id="TIGR00182">
    <property type="entry name" value="plsX"/>
    <property type="match status" value="1"/>
</dbReference>
<dbReference type="PANTHER" id="PTHR30100">
    <property type="entry name" value="FATTY ACID/PHOSPHOLIPID SYNTHESIS PROTEIN PLSX"/>
    <property type="match status" value="1"/>
</dbReference>
<dbReference type="PANTHER" id="PTHR30100:SF1">
    <property type="entry name" value="PHOSPHATE ACYLTRANSFERASE"/>
    <property type="match status" value="1"/>
</dbReference>
<dbReference type="Pfam" id="PF02504">
    <property type="entry name" value="FA_synthesis"/>
    <property type="match status" value="1"/>
</dbReference>
<dbReference type="PIRSF" id="PIRSF002465">
    <property type="entry name" value="Phsphlp_syn_PlsX"/>
    <property type="match status" value="1"/>
</dbReference>
<dbReference type="SUPFAM" id="SSF53659">
    <property type="entry name" value="Isocitrate/Isopropylmalate dehydrogenase-like"/>
    <property type="match status" value="1"/>
</dbReference>
<feature type="chain" id="PRO_1000001742" description="Phosphate acyltransferase">
    <location>
        <begin position="1"/>
        <end position="330"/>
    </location>
</feature>
<gene>
    <name evidence="1" type="primary">plsX</name>
    <name type="ordered locus">CHAB381_1491</name>
</gene>
<comment type="function">
    <text evidence="1">Catalyzes the reversible formation of acyl-phosphate (acyl-PO(4)) from acyl-[acyl-carrier-protein] (acyl-ACP). This enzyme utilizes acyl-ACP as fatty acyl donor, but not acyl-CoA.</text>
</comment>
<comment type="catalytic activity">
    <reaction evidence="1">
        <text>a fatty acyl-[ACP] + phosphate = an acyl phosphate + holo-[ACP]</text>
        <dbReference type="Rhea" id="RHEA:42292"/>
        <dbReference type="Rhea" id="RHEA-COMP:9685"/>
        <dbReference type="Rhea" id="RHEA-COMP:14125"/>
        <dbReference type="ChEBI" id="CHEBI:43474"/>
        <dbReference type="ChEBI" id="CHEBI:59918"/>
        <dbReference type="ChEBI" id="CHEBI:64479"/>
        <dbReference type="ChEBI" id="CHEBI:138651"/>
        <dbReference type="EC" id="2.3.1.274"/>
    </reaction>
</comment>
<comment type="pathway">
    <text evidence="1">Lipid metabolism; phospholipid metabolism.</text>
</comment>
<comment type="subunit">
    <text evidence="1">Homodimer. Probably interacts with PlsY.</text>
</comment>
<comment type="subcellular location">
    <subcellularLocation>
        <location evidence="1">Cytoplasm</location>
    </subcellularLocation>
    <text evidence="1">Associated with the membrane possibly through PlsY.</text>
</comment>
<comment type="similarity">
    <text evidence="1">Belongs to the PlsX family.</text>
</comment>
<keyword id="KW-0963">Cytoplasm</keyword>
<keyword id="KW-0444">Lipid biosynthesis</keyword>
<keyword id="KW-0443">Lipid metabolism</keyword>
<keyword id="KW-0594">Phospholipid biosynthesis</keyword>
<keyword id="KW-1208">Phospholipid metabolism</keyword>
<keyword id="KW-1185">Reference proteome</keyword>
<keyword id="KW-0808">Transferase</keyword>
<sequence length="330" mass="35800">MICVAIDAMGGDFGCEPIIEGTIDALKEREFTAFLVGDQAQMEKFVPKEFINRVKFIQSNEIFEMKEGATNVLRHKESSIYKAVELVRSGECQAVVSAGHSGATMSLATLRVGRLKNVARPPIATLMPTSTGTRTLLLDVGANVDCKAEHIFQFGVMGEAYAKEIMGIKEPKIGILSNGEEDGKGNEVTKEAFKLLKKMKNFVGNAEGSQIFDGSMDVIVCDGFVGNIALKSSEGVAHAMNKLIKKEVKKSPLAIAGAVLMKKVFKIVRKNTDYDEYGGAPLLGVKNCVIISHGKSTPKAIKNAIFQALKFSNSNINSVISNELEKFKNE</sequence>
<proteinExistence type="inferred from homology"/>
<name>PLSX_CAMHC</name>
<protein>
    <recommendedName>
        <fullName evidence="1">Phosphate acyltransferase</fullName>
        <ecNumber evidence="1">2.3.1.274</ecNumber>
    </recommendedName>
    <alternativeName>
        <fullName evidence="1">Acyl-ACP phosphotransacylase</fullName>
    </alternativeName>
    <alternativeName>
        <fullName evidence="1">Acyl-[acyl-carrier-protein]--phosphate acyltransferase</fullName>
    </alternativeName>
    <alternativeName>
        <fullName evidence="1">Phosphate-acyl-ACP acyltransferase</fullName>
    </alternativeName>
</protein>
<evidence type="ECO:0000255" key="1">
    <source>
        <dbReference type="HAMAP-Rule" id="MF_00019"/>
    </source>
</evidence>